<protein>
    <recommendedName>
        <fullName evidence="1">ATP synthase subunit beta, chloroplastic</fullName>
        <ecNumber evidence="1">7.1.2.2</ecNumber>
    </recommendedName>
    <alternativeName>
        <fullName evidence="1">ATP synthase F1 sector subunit beta</fullName>
    </alternativeName>
    <alternativeName>
        <fullName evidence="1">F-ATPase subunit beta</fullName>
    </alternativeName>
</protein>
<name>ATPB_CINCA</name>
<comment type="function">
    <text evidence="1">Produces ATP from ADP in the presence of a proton gradient across the membrane. The catalytic sites are hosted primarily by the beta subunits.</text>
</comment>
<comment type="catalytic activity">
    <reaction evidence="1">
        <text>ATP + H2O + 4 H(+)(in) = ADP + phosphate + 5 H(+)(out)</text>
        <dbReference type="Rhea" id="RHEA:57720"/>
        <dbReference type="ChEBI" id="CHEBI:15377"/>
        <dbReference type="ChEBI" id="CHEBI:15378"/>
        <dbReference type="ChEBI" id="CHEBI:30616"/>
        <dbReference type="ChEBI" id="CHEBI:43474"/>
        <dbReference type="ChEBI" id="CHEBI:456216"/>
        <dbReference type="EC" id="7.1.2.2"/>
    </reaction>
</comment>
<comment type="subunit">
    <text evidence="1">F-type ATPases have 2 components, CF(1) - the catalytic core - and CF(0) - the membrane proton channel. CF(1) has five subunits: alpha(3), beta(3), gamma(1), delta(1), epsilon(1). CF(0) has four main subunits: a(1), b(1), b'(1) and c(9-12).</text>
</comment>
<comment type="subcellular location">
    <subcellularLocation>
        <location evidence="1">Plastid</location>
        <location evidence="1">Chloroplast thylakoid membrane</location>
        <topology evidence="1">Peripheral membrane protein</topology>
    </subcellularLocation>
</comment>
<comment type="similarity">
    <text evidence="1">Belongs to the ATPase alpha/beta chains family.</text>
</comment>
<proteinExistence type="inferred from homology"/>
<gene>
    <name evidence="1" type="primary">atpB</name>
</gene>
<feature type="chain" id="PRO_0000254460" description="ATP synthase subunit beta, chloroplastic">
    <location>
        <begin position="1"/>
        <end position="498"/>
    </location>
</feature>
<feature type="binding site" evidence="1">
    <location>
        <begin position="172"/>
        <end position="179"/>
    </location>
    <ligand>
        <name>ATP</name>
        <dbReference type="ChEBI" id="CHEBI:30616"/>
    </ligand>
</feature>
<accession>Q9MRR1</accession>
<sequence length="498" mass="53644">MRINPTTSGPGVSTLEKKNLGRIAQIIGPVLDVAFPPGKMPNIYNALVVKGRDTVGQQINVTCEVQQLLGNNRVRAVAMSATDGLMRGMEVIDTGAPLSVPVGGATLGRIFNVLGEPVDNLGPVDTRTTSPIHRSAPAFIQLDTKLSIFETGIKVVDLLAPYRRGGKIGLFGGAGVGKTVLIMELINNIAKAHGGVSVFGGVGERTREGNDLYMEMKESGVINEQNIAESKVALVHGQMNEPPGARMRVGLTALTMAEYFRDVNEQDVLLFIDNIFRFVQAGSEVSALLGRMPSAVGYQPTLSTEMGSLQERITSTKEGSITSIQAVYVPADDLTDPAPATTFAHLDATTVLSRGLAAKGIYPAVDPLDSTSTMLQPRIVGEEHYETAQRVKQTSQRYKELQDIIAILGLDELSEEDRLTVARARKIERFLSQPFFVAEVFTGSPGKYVGLTETIRGFQLILSGELDGLPEQAFYLVGNIDEATAKAMNLEVESNLKK</sequence>
<evidence type="ECO:0000255" key="1">
    <source>
        <dbReference type="HAMAP-Rule" id="MF_01347"/>
    </source>
</evidence>
<keyword id="KW-0066">ATP synthesis</keyword>
<keyword id="KW-0067">ATP-binding</keyword>
<keyword id="KW-0139">CF(1)</keyword>
<keyword id="KW-0150">Chloroplast</keyword>
<keyword id="KW-0375">Hydrogen ion transport</keyword>
<keyword id="KW-0406">Ion transport</keyword>
<keyword id="KW-0472">Membrane</keyword>
<keyword id="KW-0547">Nucleotide-binding</keyword>
<keyword id="KW-0934">Plastid</keyword>
<keyword id="KW-0793">Thylakoid</keyword>
<keyword id="KW-1278">Translocase</keyword>
<keyword id="KW-0813">Transport</keyword>
<dbReference type="EC" id="7.1.2.2" evidence="1"/>
<dbReference type="EMBL" id="AJ235436">
    <property type="protein sequence ID" value="CAB89704.1"/>
    <property type="molecule type" value="Genomic_DNA"/>
</dbReference>
<dbReference type="SMR" id="Q9MRR1"/>
<dbReference type="GO" id="GO:0009535">
    <property type="term" value="C:chloroplast thylakoid membrane"/>
    <property type="evidence" value="ECO:0007669"/>
    <property type="project" value="UniProtKB-SubCell"/>
</dbReference>
<dbReference type="GO" id="GO:0005739">
    <property type="term" value="C:mitochondrion"/>
    <property type="evidence" value="ECO:0007669"/>
    <property type="project" value="GOC"/>
</dbReference>
<dbReference type="GO" id="GO:0045259">
    <property type="term" value="C:proton-transporting ATP synthase complex"/>
    <property type="evidence" value="ECO:0007669"/>
    <property type="project" value="UniProtKB-KW"/>
</dbReference>
<dbReference type="GO" id="GO:0005524">
    <property type="term" value="F:ATP binding"/>
    <property type="evidence" value="ECO:0007669"/>
    <property type="project" value="UniProtKB-UniRule"/>
</dbReference>
<dbReference type="GO" id="GO:0016887">
    <property type="term" value="F:ATP hydrolysis activity"/>
    <property type="evidence" value="ECO:0007669"/>
    <property type="project" value="InterPro"/>
</dbReference>
<dbReference type="GO" id="GO:0046933">
    <property type="term" value="F:proton-transporting ATP synthase activity, rotational mechanism"/>
    <property type="evidence" value="ECO:0007669"/>
    <property type="project" value="UniProtKB-UniRule"/>
</dbReference>
<dbReference type="GO" id="GO:0042776">
    <property type="term" value="P:proton motive force-driven mitochondrial ATP synthesis"/>
    <property type="evidence" value="ECO:0007669"/>
    <property type="project" value="TreeGrafter"/>
</dbReference>
<dbReference type="CDD" id="cd18110">
    <property type="entry name" value="ATP-synt_F1_beta_C"/>
    <property type="match status" value="1"/>
</dbReference>
<dbReference type="CDD" id="cd18115">
    <property type="entry name" value="ATP-synt_F1_beta_N"/>
    <property type="match status" value="1"/>
</dbReference>
<dbReference type="CDD" id="cd01133">
    <property type="entry name" value="F1-ATPase_beta_CD"/>
    <property type="match status" value="1"/>
</dbReference>
<dbReference type="FunFam" id="1.10.1140.10:FF:000001">
    <property type="entry name" value="ATP synthase subunit beta"/>
    <property type="match status" value="1"/>
</dbReference>
<dbReference type="FunFam" id="3.40.50.12240:FF:000006">
    <property type="entry name" value="ATP synthase subunit beta"/>
    <property type="match status" value="1"/>
</dbReference>
<dbReference type="FunFam" id="3.40.50.300:FF:000004">
    <property type="entry name" value="ATP synthase subunit beta"/>
    <property type="match status" value="1"/>
</dbReference>
<dbReference type="FunFam" id="2.40.10.170:FF:000002">
    <property type="entry name" value="ATP synthase subunit beta, chloroplastic"/>
    <property type="match status" value="1"/>
</dbReference>
<dbReference type="Gene3D" id="2.40.10.170">
    <property type="match status" value="1"/>
</dbReference>
<dbReference type="Gene3D" id="1.10.1140.10">
    <property type="entry name" value="Bovine Mitochondrial F1-atpase, Atp Synthase Beta Chain, Chain D, domain 3"/>
    <property type="match status" value="1"/>
</dbReference>
<dbReference type="Gene3D" id="3.40.50.300">
    <property type="entry name" value="P-loop containing nucleotide triphosphate hydrolases"/>
    <property type="match status" value="1"/>
</dbReference>
<dbReference type="HAMAP" id="MF_01347">
    <property type="entry name" value="ATP_synth_beta_bact"/>
    <property type="match status" value="1"/>
</dbReference>
<dbReference type="InterPro" id="IPR003593">
    <property type="entry name" value="AAA+_ATPase"/>
</dbReference>
<dbReference type="InterPro" id="IPR055190">
    <property type="entry name" value="ATP-synt_VA_C"/>
</dbReference>
<dbReference type="InterPro" id="IPR005722">
    <property type="entry name" value="ATP_synth_F1_bsu"/>
</dbReference>
<dbReference type="InterPro" id="IPR020003">
    <property type="entry name" value="ATPase_a/bsu_AS"/>
</dbReference>
<dbReference type="InterPro" id="IPR050053">
    <property type="entry name" value="ATPase_alpha/beta_chains"/>
</dbReference>
<dbReference type="InterPro" id="IPR004100">
    <property type="entry name" value="ATPase_F1/V1/A1_a/bsu_N"/>
</dbReference>
<dbReference type="InterPro" id="IPR036121">
    <property type="entry name" value="ATPase_F1/V1/A1_a/bsu_N_sf"/>
</dbReference>
<dbReference type="InterPro" id="IPR000194">
    <property type="entry name" value="ATPase_F1/V1/A1_a/bsu_nucl-bd"/>
</dbReference>
<dbReference type="InterPro" id="IPR024034">
    <property type="entry name" value="ATPase_F1/V1_b/a_C"/>
</dbReference>
<dbReference type="InterPro" id="IPR027417">
    <property type="entry name" value="P-loop_NTPase"/>
</dbReference>
<dbReference type="NCBIfam" id="TIGR01039">
    <property type="entry name" value="atpD"/>
    <property type="match status" value="1"/>
</dbReference>
<dbReference type="PANTHER" id="PTHR15184">
    <property type="entry name" value="ATP SYNTHASE"/>
    <property type="match status" value="1"/>
</dbReference>
<dbReference type="PANTHER" id="PTHR15184:SF71">
    <property type="entry name" value="ATP SYNTHASE SUBUNIT BETA, MITOCHONDRIAL"/>
    <property type="match status" value="1"/>
</dbReference>
<dbReference type="Pfam" id="PF00006">
    <property type="entry name" value="ATP-synt_ab"/>
    <property type="match status" value="1"/>
</dbReference>
<dbReference type="Pfam" id="PF02874">
    <property type="entry name" value="ATP-synt_ab_N"/>
    <property type="match status" value="1"/>
</dbReference>
<dbReference type="Pfam" id="PF22919">
    <property type="entry name" value="ATP-synt_VA_C"/>
    <property type="match status" value="1"/>
</dbReference>
<dbReference type="SMART" id="SM00382">
    <property type="entry name" value="AAA"/>
    <property type="match status" value="1"/>
</dbReference>
<dbReference type="SUPFAM" id="SSF47917">
    <property type="entry name" value="C-terminal domain of alpha and beta subunits of F1 ATP synthase"/>
    <property type="match status" value="1"/>
</dbReference>
<dbReference type="SUPFAM" id="SSF50615">
    <property type="entry name" value="N-terminal domain of alpha and beta subunits of F1 ATP synthase"/>
    <property type="match status" value="1"/>
</dbReference>
<dbReference type="SUPFAM" id="SSF52540">
    <property type="entry name" value="P-loop containing nucleoside triphosphate hydrolases"/>
    <property type="match status" value="1"/>
</dbReference>
<dbReference type="PROSITE" id="PS00152">
    <property type="entry name" value="ATPASE_ALPHA_BETA"/>
    <property type="match status" value="1"/>
</dbReference>
<reference key="1">
    <citation type="journal article" date="2000" name="Syst. Biol.">
        <title>Phylogenetics of flowering plants based upon a combined analysis of plastid atpB and rbcL gene sequences.</title>
        <authorList>
            <person name="Savolainen V."/>
            <person name="Chase M.W."/>
            <person name="Morton C.M."/>
            <person name="Hoot S.B."/>
            <person name="Soltis D.E."/>
            <person name="Bayer C."/>
            <person name="Fay M.F."/>
            <person name="de Bruijn A."/>
            <person name="Sullivan S."/>
            <person name="Qiu Y.-L."/>
        </authorList>
    </citation>
    <scope>NUCLEOTIDE SEQUENCE [GENOMIC DNA]</scope>
</reference>
<organism>
    <name type="scientific">Cinnamomum camphora</name>
    <name type="common">Camphor tree</name>
    <name type="synonym">Laurus camphora</name>
    <dbReference type="NCBI Taxonomy" id="13429"/>
    <lineage>
        <taxon>Eukaryota</taxon>
        <taxon>Viridiplantae</taxon>
        <taxon>Streptophyta</taxon>
        <taxon>Embryophyta</taxon>
        <taxon>Tracheophyta</taxon>
        <taxon>Spermatophyta</taxon>
        <taxon>Magnoliopsida</taxon>
        <taxon>Magnoliidae</taxon>
        <taxon>Laurales</taxon>
        <taxon>Lauraceae</taxon>
        <taxon>Cinnamomum</taxon>
    </lineage>
</organism>
<geneLocation type="chloroplast"/>